<evidence type="ECO:0000255" key="1">
    <source>
        <dbReference type="HAMAP-Rule" id="MF_01227"/>
    </source>
</evidence>
<comment type="function">
    <text evidence="1">Catalyzes the ATP-dependent amination of UTP to CTP with either L-glutamine or ammonia as the source of nitrogen. Regulates intracellular CTP levels through interactions with the four ribonucleotide triphosphates.</text>
</comment>
<comment type="catalytic activity">
    <reaction evidence="1">
        <text>UTP + L-glutamine + ATP + H2O = CTP + L-glutamate + ADP + phosphate + 2 H(+)</text>
        <dbReference type="Rhea" id="RHEA:26426"/>
        <dbReference type="ChEBI" id="CHEBI:15377"/>
        <dbReference type="ChEBI" id="CHEBI:15378"/>
        <dbReference type="ChEBI" id="CHEBI:29985"/>
        <dbReference type="ChEBI" id="CHEBI:30616"/>
        <dbReference type="ChEBI" id="CHEBI:37563"/>
        <dbReference type="ChEBI" id="CHEBI:43474"/>
        <dbReference type="ChEBI" id="CHEBI:46398"/>
        <dbReference type="ChEBI" id="CHEBI:58359"/>
        <dbReference type="ChEBI" id="CHEBI:456216"/>
        <dbReference type="EC" id="6.3.4.2"/>
    </reaction>
</comment>
<comment type="catalytic activity">
    <reaction evidence="1">
        <text>L-glutamine + H2O = L-glutamate + NH4(+)</text>
        <dbReference type="Rhea" id="RHEA:15889"/>
        <dbReference type="ChEBI" id="CHEBI:15377"/>
        <dbReference type="ChEBI" id="CHEBI:28938"/>
        <dbReference type="ChEBI" id="CHEBI:29985"/>
        <dbReference type="ChEBI" id="CHEBI:58359"/>
    </reaction>
</comment>
<comment type="catalytic activity">
    <reaction evidence="1">
        <text>UTP + NH4(+) + ATP = CTP + ADP + phosphate + 2 H(+)</text>
        <dbReference type="Rhea" id="RHEA:16597"/>
        <dbReference type="ChEBI" id="CHEBI:15378"/>
        <dbReference type="ChEBI" id="CHEBI:28938"/>
        <dbReference type="ChEBI" id="CHEBI:30616"/>
        <dbReference type="ChEBI" id="CHEBI:37563"/>
        <dbReference type="ChEBI" id="CHEBI:43474"/>
        <dbReference type="ChEBI" id="CHEBI:46398"/>
        <dbReference type="ChEBI" id="CHEBI:456216"/>
    </reaction>
</comment>
<comment type="activity regulation">
    <text evidence="1">Allosterically activated by GTP, when glutamine is the substrate; GTP has no effect on the reaction when ammonia is the substrate. The allosteric effector GTP functions by stabilizing the protein conformation that binds the tetrahedral intermediate(s) formed during glutamine hydrolysis. Inhibited by the product CTP, via allosteric rather than competitive inhibition.</text>
</comment>
<comment type="pathway">
    <text evidence="1">Pyrimidine metabolism; CTP biosynthesis via de novo pathway; CTP from UDP: step 2/2.</text>
</comment>
<comment type="subunit">
    <text evidence="1">Homotetramer.</text>
</comment>
<comment type="miscellaneous">
    <text evidence="1">CTPSs have evolved a hybrid strategy for distinguishing between UTP and CTP. The overlapping regions of the product feedback inhibitory and substrate sites recognize a common feature in both compounds, the triphosphate moiety. To differentiate isosteric substrate and product pyrimidine rings, an additional pocket far from the expected kinase/ligase catalytic site, specifically recognizes the cytosine and ribose portions of the product inhibitor.</text>
</comment>
<comment type="similarity">
    <text evidence="1">Belongs to the CTP synthase family.</text>
</comment>
<feature type="chain" id="PRO_0000266161" description="CTP synthase">
    <location>
        <begin position="1"/>
        <end position="548"/>
    </location>
</feature>
<feature type="domain" description="Glutamine amidotransferase type-1" evidence="1">
    <location>
        <begin position="305"/>
        <end position="548"/>
    </location>
</feature>
<feature type="region of interest" description="Amidoligase domain" evidence="1">
    <location>
        <begin position="1"/>
        <end position="270"/>
    </location>
</feature>
<feature type="active site" description="Nucleophile; for glutamine hydrolysis" evidence="1">
    <location>
        <position position="383"/>
    </location>
</feature>
<feature type="active site" evidence="1">
    <location>
        <position position="521"/>
    </location>
</feature>
<feature type="active site" evidence="1">
    <location>
        <position position="523"/>
    </location>
</feature>
<feature type="binding site" evidence="1">
    <location>
        <position position="17"/>
    </location>
    <ligand>
        <name>CTP</name>
        <dbReference type="ChEBI" id="CHEBI:37563"/>
        <note>allosteric inhibitor</note>
    </ligand>
</feature>
<feature type="binding site" evidence="1">
    <location>
        <position position="17"/>
    </location>
    <ligand>
        <name>UTP</name>
        <dbReference type="ChEBI" id="CHEBI:46398"/>
    </ligand>
</feature>
<feature type="binding site" evidence="1">
    <location>
        <begin position="18"/>
        <end position="23"/>
    </location>
    <ligand>
        <name>ATP</name>
        <dbReference type="ChEBI" id="CHEBI:30616"/>
    </ligand>
</feature>
<feature type="binding site" evidence="1">
    <location>
        <position position="75"/>
    </location>
    <ligand>
        <name>ATP</name>
        <dbReference type="ChEBI" id="CHEBI:30616"/>
    </ligand>
</feature>
<feature type="binding site" evidence="1">
    <location>
        <position position="75"/>
    </location>
    <ligand>
        <name>Mg(2+)</name>
        <dbReference type="ChEBI" id="CHEBI:18420"/>
    </ligand>
</feature>
<feature type="binding site" evidence="1">
    <location>
        <position position="143"/>
    </location>
    <ligand>
        <name>Mg(2+)</name>
        <dbReference type="ChEBI" id="CHEBI:18420"/>
    </ligand>
</feature>
<feature type="binding site" evidence="1">
    <location>
        <begin position="150"/>
        <end position="152"/>
    </location>
    <ligand>
        <name>CTP</name>
        <dbReference type="ChEBI" id="CHEBI:37563"/>
        <note>allosteric inhibitor</note>
    </ligand>
</feature>
<feature type="binding site" evidence="1">
    <location>
        <begin position="190"/>
        <end position="195"/>
    </location>
    <ligand>
        <name>CTP</name>
        <dbReference type="ChEBI" id="CHEBI:37563"/>
        <note>allosteric inhibitor</note>
    </ligand>
</feature>
<feature type="binding site" evidence="1">
    <location>
        <begin position="190"/>
        <end position="195"/>
    </location>
    <ligand>
        <name>UTP</name>
        <dbReference type="ChEBI" id="CHEBI:46398"/>
    </ligand>
</feature>
<feature type="binding site" evidence="1">
    <location>
        <position position="227"/>
    </location>
    <ligand>
        <name>CTP</name>
        <dbReference type="ChEBI" id="CHEBI:37563"/>
        <note>allosteric inhibitor</note>
    </ligand>
</feature>
<feature type="binding site" evidence="1">
    <location>
        <position position="227"/>
    </location>
    <ligand>
        <name>UTP</name>
        <dbReference type="ChEBI" id="CHEBI:46398"/>
    </ligand>
</feature>
<feature type="binding site" evidence="1">
    <location>
        <position position="356"/>
    </location>
    <ligand>
        <name>L-glutamine</name>
        <dbReference type="ChEBI" id="CHEBI:58359"/>
    </ligand>
</feature>
<feature type="binding site" evidence="1">
    <location>
        <begin position="384"/>
        <end position="387"/>
    </location>
    <ligand>
        <name>L-glutamine</name>
        <dbReference type="ChEBI" id="CHEBI:58359"/>
    </ligand>
</feature>
<feature type="binding site" evidence="1">
    <location>
        <position position="407"/>
    </location>
    <ligand>
        <name>L-glutamine</name>
        <dbReference type="ChEBI" id="CHEBI:58359"/>
    </ligand>
</feature>
<feature type="binding site" evidence="1">
    <location>
        <position position="475"/>
    </location>
    <ligand>
        <name>L-glutamine</name>
        <dbReference type="ChEBI" id="CHEBI:58359"/>
    </ligand>
</feature>
<organism>
    <name type="scientific">Neorickettsia sennetsu (strain ATCC VR-367 / Miyayama)</name>
    <name type="common">Ehrlichia sennetsu</name>
    <dbReference type="NCBI Taxonomy" id="222891"/>
    <lineage>
        <taxon>Bacteria</taxon>
        <taxon>Pseudomonadati</taxon>
        <taxon>Pseudomonadota</taxon>
        <taxon>Alphaproteobacteria</taxon>
        <taxon>Rickettsiales</taxon>
        <taxon>Anaplasmataceae</taxon>
        <taxon>Neorickettsia</taxon>
    </lineage>
</organism>
<reference key="1">
    <citation type="journal article" date="2006" name="PLoS Genet.">
        <title>Comparative genomics of emerging human ehrlichiosis agents.</title>
        <authorList>
            <person name="Dunning Hotopp J.C."/>
            <person name="Lin M."/>
            <person name="Madupu R."/>
            <person name="Crabtree J."/>
            <person name="Angiuoli S.V."/>
            <person name="Eisen J.A."/>
            <person name="Seshadri R."/>
            <person name="Ren Q."/>
            <person name="Wu M."/>
            <person name="Utterback T.R."/>
            <person name="Smith S."/>
            <person name="Lewis M."/>
            <person name="Khouri H."/>
            <person name="Zhang C."/>
            <person name="Niu H."/>
            <person name="Lin Q."/>
            <person name="Ohashi N."/>
            <person name="Zhi N."/>
            <person name="Nelson W.C."/>
            <person name="Brinkac L.M."/>
            <person name="Dodson R.J."/>
            <person name="Rosovitz M.J."/>
            <person name="Sundaram J.P."/>
            <person name="Daugherty S.C."/>
            <person name="Davidsen T."/>
            <person name="Durkin A.S."/>
            <person name="Gwinn M.L."/>
            <person name="Haft D.H."/>
            <person name="Selengut J.D."/>
            <person name="Sullivan S.A."/>
            <person name="Zafar N."/>
            <person name="Zhou L."/>
            <person name="Benahmed F."/>
            <person name="Forberger H."/>
            <person name="Halpin R."/>
            <person name="Mulligan S."/>
            <person name="Robinson J."/>
            <person name="White O."/>
            <person name="Rikihisa Y."/>
            <person name="Tettelin H."/>
        </authorList>
    </citation>
    <scope>NUCLEOTIDE SEQUENCE [LARGE SCALE GENOMIC DNA]</scope>
    <source>
        <strain>ATCC VR-367 / Miyayama</strain>
    </source>
</reference>
<sequence>MNRRSCAFIFVTGGVSSSIGKGLTTSALASLMQSMGFRVCIRKMDPYLNVDPGTMSPLQHGEVFVTEDGTEADLDLGHYERFTGINCTHRDSTTAGRIYVDLIERERNGEYLGATVQVIPHVTNLIKDFIYSGSDQYDVILCEIGGTVGDIEGQPFFESARQVAYEVGKENVIYIHLTLVPYLEASGELKTKPSQHSVKALNALGIQPDFLICRTQSAQMSAADKRKIALFCNIREGNVIEAQDVDNIYKIPLIYKEQGLDTKISALLGCGPLEAGVSHWKEIVGRTRSLANSGKKLFVAIIGKYSGLCDAYISVDSALQHAAFAVGVNLSVQIIDARGKDMSDLSKFDMILIPGGFGNNGIDGKLLAITHARINNIPFLGICFGFQLAILEFARNVVGIKDADSTEFNKNCKAPVICFLDEWHRSDSSVERRRQSSQVGGTMRLGGYNCVLKKESKAYAIYNETEVISERHRHRYEANPHYLPELEAKGMLFSGYSEKGCDIPEILELKDHPWFLGVQFHPEFKSRIFKPHPLFLSFVRAGLLRKYS</sequence>
<proteinExistence type="inferred from homology"/>
<name>PYRG_NEOSM</name>
<dbReference type="EC" id="6.3.4.2" evidence="1"/>
<dbReference type="EMBL" id="CP000237">
    <property type="protein sequence ID" value="ABD46344.1"/>
    <property type="molecule type" value="Genomic_DNA"/>
</dbReference>
<dbReference type="RefSeq" id="WP_011452250.1">
    <property type="nucleotide sequence ID" value="NC_007798.1"/>
</dbReference>
<dbReference type="SMR" id="Q2GCQ2"/>
<dbReference type="STRING" id="222891.NSE_0877"/>
<dbReference type="MEROPS" id="C26.964"/>
<dbReference type="KEGG" id="nse:NSE_0877"/>
<dbReference type="eggNOG" id="COG0504">
    <property type="taxonomic scope" value="Bacteria"/>
</dbReference>
<dbReference type="HOGENOM" id="CLU_011675_5_0_5"/>
<dbReference type="OrthoDB" id="9801107at2"/>
<dbReference type="UniPathway" id="UPA00159">
    <property type="reaction ID" value="UER00277"/>
</dbReference>
<dbReference type="Proteomes" id="UP000001942">
    <property type="component" value="Chromosome"/>
</dbReference>
<dbReference type="GO" id="GO:0005829">
    <property type="term" value="C:cytosol"/>
    <property type="evidence" value="ECO:0007669"/>
    <property type="project" value="TreeGrafter"/>
</dbReference>
<dbReference type="GO" id="GO:0005524">
    <property type="term" value="F:ATP binding"/>
    <property type="evidence" value="ECO:0007669"/>
    <property type="project" value="UniProtKB-KW"/>
</dbReference>
<dbReference type="GO" id="GO:0003883">
    <property type="term" value="F:CTP synthase activity"/>
    <property type="evidence" value="ECO:0007669"/>
    <property type="project" value="UniProtKB-UniRule"/>
</dbReference>
<dbReference type="GO" id="GO:0004359">
    <property type="term" value="F:glutaminase activity"/>
    <property type="evidence" value="ECO:0007669"/>
    <property type="project" value="RHEA"/>
</dbReference>
<dbReference type="GO" id="GO:0042802">
    <property type="term" value="F:identical protein binding"/>
    <property type="evidence" value="ECO:0007669"/>
    <property type="project" value="TreeGrafter"/>
</dbReference>
<dbReference type="GO" id="GO:0046872">
    <property type="term" value="F:metal ion binding"/>
    <property type="evidence" value="ECO:0007669"/>
    <property type="project" value="UniProtKB-KW"/>
</dbReference>
<dbReference type="GO" id="GO:0044210">
    <property type="term" value="P:'de novo' CTP biosynthetic process"/>
    <property type="evidence" value="ECO:0007669"/>
    <property type="project" value="UniProtKB-UniRule"/>
</dbReference>
<dbReference type="GO" id="GO:0019856">
    <property type="term" value="P:pyrimidine nucleobase biosynthetic process"/>
    <property type="evidence" value="ECO:0007669"/>
    <property type="project" value="TreeGrafter"/>
</dbReference>
<dbReference type="CDD" id="cd03113">
    <property type="entry name" value="CTPS_N"/>
    <property type="match status" value="1"/>
</dbReference>
<dbReference type="CDD" id="cd01746">
    <property type="entry name" value="GATase1_CTP_Synthase"/>
    <property type="match status" value="1"/>
</dbReference>
<dbReference type="FunFam" id="3.40.50.300:FF:000009">
    <property type="entry name" value="CTP synthase"/>
    <property type="match status" value="1"/>
</dbReference>
<dbReference type="FunFam" id="3.40.50.880:FF:000002">
    <property type="entry name" value="CTP synthase"/>
    <property type="match status" value="1"/>
</dbReference>
<dbReference type="Gene3D" id="3.40.50.880">
    <property type="match status" value="1"/>
</dbReference>
<dbReference type="Gene3D" id="3.40.50.300">
    <property type="entry name" value="P-loop containing nucleotide triphosphate hydrolases"/>
    <property type="match status" value="1"/>
</dbReference>
<dbReference type="HAMAP" id="MF_01227">
    <property type="entry name" value="PyrG"/>
    <property type="match status" value="1"/>
</dbReference>
<dbReference type="InterPro" id="IPR029062">
    <property type="entry name" value="Class_I_gatase-like"/>
</dbReference>
<dbReference type="InterPro" id="IPR004468">
    <property type="entry name" value="CTP_synthase"/>
</dbReference>
<dbReference type="InterPro" id="IPR017456">
    <property type="entry name" value="CTP_synthase_N"/>
</dbReference>
<dbReference type="InterPro" id="IPR017926">
    <property type="entry name" value="GATASE"/>
</dbReference>
<dbReference type="InterPro" id="IPR033828">
    <property type="entry name" value="GATase1_CTP_Synthase"/>
</dbReference>
<dbReference type="InterPro" id="IPR027417">
    <property type="entry name" value="P-loop_NTPase"/>
</dbReference>
<dbReference type="NCBIfam" id="NF003792">
    <property type="entry name" value="PRK05380.1"/>
    <property type="match status" value="1"/>
</dbReference>
<dbReference type="NCBIfam" id="TIGR00337">
    <property type="entry name" value="PyrG"/>
    <property type="match status" value="1"/>
</dbReference>
<dbReference type="PANTHER" id="PTHR11550">
    <property type="entry name" value="CTP SYNTHASE"/>
    <property type="match status" value="1"/>
</dbReference>
<dbReference type="PANTHER" id="PTHR11550:SF0">
    <property type="entry name" value="CTP SYNTHASE-RELATED"/>
    <property type="match status" value="1"/>
</dbReference>
<dbReference type="Pfam" id="PF06418">
    <property type="entry name" value="CTP_synth_N"/>
    <property type="match status" value="1"/>
</dbReference>
<dbReference type="Pfam" id="PF00117">
    <property type="entry name" value="GATase"/>
    <property type="match status" value="1"/>
</dbReference>
<dbReference type="SUPFAM" id="SSF52317">
    <property type="entry name" value="Class I glutamine amidotransferase-like"/>
    <property type="match status" value="1"/>
</dbReference>
<dbReference type="SUPFAM" id="SSF52540">
    <property type="entry name" value="P-loop containing nucleoside triphosphate hydrolases"/>
    <property type="match status" value="1"/>
</dbReference>
<dbReference type="PROSITE" id="PS51273">
    <property type="entry name" value="GATASE_TYPE_1"/>
    <property type="match status" value="1"/>
</dbReference>
<gene>
    <name evidence="1" type="primary">pyrG</name>
    <name type="ordered locus">NSE_0877</name>
</gene>
<protein>
    <recommendedName>
        <fullName evidence="1">CTP synthase</fullName>
        <ecNumber evidence="1">6.3.4.2</ecNumber>
    </recommendedName>
    <alternativeName>
        <fullName evidence="1">Cytidine 5'-triphosphate synthase</fullName>
    </alternativeName>
    <alternativeName>
        <fullName evidence="1">Cytidine triphosphate synthetase</fullName>
        <shortName evidence="1">CTP synthetase</shortName>
        <shortName evidence="1">CTPS</shortName>
    </alternativeName>
    <alternativeName>
        <fullName evidence="1">UTP--ammonia ligase</fullName>
    </alternativeName>
</protein>
<accession>Q2GCQ2</accession>
<keyword id="KW-0067">ATP-binding</keyword>
<keyword id="KW-0315">Glutamine amidotransferase</keyword>
<keyword id="KW-0436">Ligase</keyword>
<keyword id="KW-0460">Magnesium</keyword>
<keyword id="KW-0479">Metal-binding</keyword>
<keyword id="KW-0547">Nucleotide-binding</keyword>
<keyword id="KW-0665">Pyrimidine biosynthesis</keyword>